<feature type="chain" id="PRO_0000442528" description="Nuclear pore complex protein Nup93-1" evidence="7">
    <location>
        <begin position="1"/>
        <end position="823"/>
    </location>
</feature>
<evidence type="ECO:0000250" key="1">
    <source>
        <dbReference type="UniProtKB" id="Q8N1F7"/>
    </source>
</evidence>
<evidence type="ECO:0000255" key="2">
    <source>
        <dbReference type="RuleBase" id="RU364035"/>
    </source>
</evidence>
<evidence type="ECO:0000269" key="3">
    <source>
    </source>
</evidence>
<evidence type="ECO:0000269" key="4">
    <source>
    </source>
</evidence>
<evidence type="ECO:0000269" key="5">
    <source>
    </source>
</evidence>
<evidence type="ECO:0000269" key="6">
    <source>
    </source>
</evidence>
<evidence type="ECO:0000305" key="7"/>
<evidence type="ECO:0000312" key="8">
    <source>
        <dbReference type="EMBL" id="AAD34747.1"/>
    </source>
</evidence>
<evidence type="ECO:0000312" key="9">
    <source>
        <dbReference type="FlyBase" id="FBgn0027537"/>
    </source>
</evidence>
<evidence type="ECO:0000312" key="10">
    <source>
        <dbReference type="Proteomes" id="UP000000803"/>
    </source>
</evidence>
<comment type="function">
    <text evidence="3 4 5 6">Required for nuclear pore complex assembly, maintenance and function (PubMed:20547758, PubMed:22718353). Required for nuclear import of phosphorylated Mad via importin msk (PubMed:20547758). Has no role in classical nuclear localization signal (cNLS)-dependent nuclear import via importin-beta (PubMed:20547758). Mediates the association between the nuclear pore complex and a subclass of silenced regions bound by Polycomb group (PcG) proteins, enables long-range interactions between Polycomb loci and contributes to repression of polycomb targets (PubMed:31784359). Together with Nup62 and Nup154, contributes to karyosome morphology and chromatin organization including attachment to the nuclear envelope in oocytes and nurse cells (PubMed:26341556).</text>
</comment>
<comment type="subunit">
    <text evidence="1 3 4 6">Part of the nuclear pore complex (NPC) (By similarity). Interacts with msk (via C-terminus); this association might be facilitated by Nup75 (PubMed:20547758). Interacts with Mad (preferentially when phosphorylated) (PubMed:20547758). Interacts with Nup154 (via N-terminus) (PubMed:22718353). Interacts with the Polycomb group (PcG) proteins Pc and E(z) (PubMed:31784359).</text>
</comment>
<comment type="interaction">
    <interactant intactId="EBI-179313">
        <id>Q9XZ06</id>
    </interactant>
    <interactant intactId="EBI-118619">
        <id>Q9V463</id>
        <label>Nup154</label>
    </interactant>
    <organismsDiffer>false</organismsDiffer>
    <experiments>3</experiments>
</comment>
<comment type="subcellular location">
    <subcellularLocation>
        <location evidence="1">Nucleus membrane</location>
    </subcellularLocation>
    <subcellularLocation>
        <location evidence="6">Nucleus</location>
        <location evidence="6">Nuclear pore complex</location>
    </subcellularLocation>
    <subcellularLocation>
        <location evidence="6">Nucleus</location>
        <location evidence="6">Nucleoplasm</location>
    </subcellularLocation>
    <text evidence="6">When not in the nuclear pore complex, can localize to the nuclear lumen proximal to the inner nuclear membrane.</text>
</comment>
<comment type="disruption phenotype">
    <text evidence="5 6">RNAi-mediated knockdown in oocytes and nurse cells results in irregular distribution of chromatin to the nuclear periphery, leading to disrupted karyosome morphology (PubMed:26341556). RNAi-mediated knockdown in the wing disk results in de-repression of genes silenced by the Polycomb group proteins complexes such Abd-B (PubMed:31784359).</text>
</comment>
<comment type="similarity">
    <text evidence="2">Belongs to the nucleoporin interacting component (NIC) family.</text>
</comment>
<keyword id="KW-0156">Chromatin regulator</keyword>
<keyword id="KW-0472">Membrane</keyword>
<keyword id="KW-0509">mRNA transport</keyword>
<keyword id="KW-0906">Nuclear pore complex</keyword>
<keyword id="KW-0539">Nucleus</keyword>
<keyword id="KW-0653">Protein transport</keyword>
<keyword id="KW-1185">Reference proteome</keyword>
<keyword id="KW-0811">Translocation</keyword>
<keyword id="KW-0813">Transport</keyword>
<dbReference type="EMBL" id="AE014298">
    <property type="protein sequence ID" value="AAF48327.1"/>
    <property type="molecule type" value="Genomic_DNA"/>
</dbReference>
<dbReference type="EMBL" id="AF132159">
    <property type="protein sequence ID" value="AAD34747.1"/>
    <property type="molecule type" value="mRNA"/>
</dbReference>
<dbReference type="RefSeq" id="NP_572929.1">
    <property type="nucleotide sequence ID" value="NM_132701.4"/>
</dbReference>
<dbReference type="SMR" id="Q9XZ06"/>
<dbReference type="ComplexPortal" id="CPX-2568">
    <property type="entry name" value="Nuclear pore complex"/>
</dbReference>
<dbReference type="FunCoup" id="Q9XZ06">
    <property type="interactions" value="2956"/>
</dbReference>
<dbReference type="IntAct" id="Q9XZ06">
    <property type="interactions" value="9"/>
</dbReference>
<dbReference type="MINT" id="Q9XZ06"/>
<dbReference type="STRING" id="7227.FBpp0073659"/>
<dbReference type="PaxDb" id="7227-FBpp0073659"/>
<dbReference type="DNASU" id="32350"/>
<dbReference type="EnsemblMetazoa" id="FBtr0073828">
    <property type="protein sequence ID" value="FBpp0073659"/>
    <property type="gene ID" value="FBgn0027537"/>
</dbReference>
<dbReference type="GeneID" id="32350"/>
<dbReference type="KEGG" id="dme:Dmel_CG11092"/>
<dbReference type="UCSC" id="CG11092-RA">
    <property type="organism name" value="d. melanogaster"/>
</dbReference>
<dbReference type="AGR" id="FB:FBgn0027537"/>
<dbReference type="CTD" id="32350"/>
<dbReference type="FlyBase" id="FBgn0027537">
    <property type="gene designation" value="Nup93-1"/>
</dbReference>
<dbReference type="VEuPathDB" id="VectorBase:FBgn0027537"/>
<dbReference type="eggNOG" id="KOG2168">
    <property type="taxonomic scope" value="Eukaryota"/>
</dbReference>
<dbReference type="GeneTree" id="ENSGT00390000016353"/>
<dbReference type="HOGENOM" id="CLU_011846_1_0_1"/>
<dbReference type="InParanoid" id="Q9XZ06"/>
<dbReference type="OMA" id="RPHAVHM"/>
<dbReference type="OrthoDB" id="1918363at2759"/>
<dbReference type="PhylomeDB" id="Q9XZ06"/>
<dbReference type="SignaLink" id="Q9XZ06"/>
<dbReference type="BioGRID-ORCS" id="32350">
    <property type="hits" value="0 hits in 1 CRISPR screen"/>
</dbReference>
<dbReference type="GenomeRNAi" id="32350"/>
<dbReference type="PRO" id="PR:Q9XZ06"/>
<dbReference type="Proteomes" id="UP000000803">
    <property type="component" value="Chromosome X"/>
</dbReference>
<dbReference type="Bgee" id="FBgn0027537">
    <property type="expression patterns" value="Expressed in egg cell and 53 other cell types or tissues"/>
</dbReference>
<dbReference type="ExpressionAtlas" id="Q9XZ06">
    <property type="expression patterns" value="baseline and differential"/>
</dbReference>
<dbReference type="GO" id="GO:0031965">
    <property type="term" value="C:nuclear membrane"/>
    <property type="evidence" value="ECO:0007669"/>
    <property type="project" value="UniProtKB-SubCell"/>
</dbReference>
<dbReference type="GO" id="GO:0034399">
    <property type="term" value="C:nuclear periphery"/>
    <property type="evidence" value="ECO:0000314"/>
    <property type="project" value="UniProtKB"/>
</dbReference>
<dbReference type="GO" id="GO:0005643">
    <property type="term" value="C:nuclear pore"/>
    <property type="evidence" value="ECO:0000314"/>
    <property type="project" value="UniProtKB"/>
</dbReference>
<dbReference type="GO" id="GO:0044615">
    <property type="term" value="C:nuclear pore nuclear basket"/>
    <property type="evidence" value="ECO:0000250"/>
    <property type="project" value="FlyBase"/>
</dbReference>
<dbReference type="GO" id="GO:0005654">
    <property type="term" value="C:nucleoplasm"/>
    <property type="evidence" value="ECO:0007669"/>
    <property type="project" value="UniProtKB-SubCell"/>
</dbReference>
<dbReference type="GO" id="GO:0003682">
    <property type="term" value="F:chromatin binding"/>
    <property type="evidence" value="ECO:0000314"/>
    <property type="project" value="UniProtKB"/>
</dbReference>
<dbReference type="GO" id="GO:0031490">
    <property type="term" value="F:chromatin DNA binding"/>
    <property type="evidence" value="ECO:0000314"/>
    <property type="project" value="UniProtKB"/>
</dbReference>
<dbReference type="GO" id="GO:0017056">
    <property type="term" value="F:structural constituent of nuclear pore"/>
    <property type="evidence" value="ECO:0000250"/>
    <property type="project" value="FlyBase"/>
</dbReference>
<dbReference type="GO" id="GO:0097240">
    <property type="term" value="P:chromosome attachment to the nuclear envelope"/>
    <property type="evidence" value="ECO:0000315"/>
    <property type="project" value="UniProtKB"/>
</dbReference>
<dbReference type="GO" id="GO:0045814">
    <property type="term" value="P:negative regulation of gene expression, epigenetic"/>
    <property type="evidence" value="ECO:0000315"/>
    <property type="project" value="GO_Central"/>
</dbReference>
<dbReference type="GO" id="GO:0006999">
    <property type="term" value="P:nuclear pore organization"/>
    <property type="evidence" value="ECO:0000250"/>
    <property type="project" value="FlyBase"/>
</dbReference>
<dbReference type="GO" id="GO:0030717">
    <property type="term" value="P:oocyte karyosome formation"/>
    <property type="evidence" value="ECO:0000315"/>
    <property type="project" value="UniProtKB"/>
</dbReference>
<dbReference type="GO" id="GO:0016973">
    <property type="term" value="P:poly(A)+ mRNA export from nucleus"/>
    <property type="evidence" value="ECO:0000318"/>
    <property type="project" value="GO_Central"/>
</dbReference>
<dbReference type="GO" id="GO:0006606">
    <property type="term" value="P:protein import into nucleus"/>
    <property type="evidence" value="ECO:0000315"/>
    <property type="project" value="FlyBase"/>
</dbReference>
<dbReference type="GO" id="GO:0036228">
    <property type="term" value="P:protein localization to nuclear inner membrane"/>
    <property type="evidence" value="ECO:0000315"/>
    <property type="project" value="FlyBase"/>
</dbReference>
<dbReference type="GO" id="GO:0097298">
    <property type="term" value="P:regulation of nucleus size"/>
    <property type="evidence" value="ECO:0000315"/>
    <property type="project" value="UniProtKB"/>
</dbReference>
<dbReference type="InterPro" id="IPR007231">
    <property type="entry name" value="Nucleoporin_int_Nup93/Nic96"/>
</dbReference>
<dbReference type="PANTHER" id="PTHR11225:SF4">
    <property type="entry name" value="NUCLEAR PORE COMPLEX PROTEIN NUP93"/>
    <property type="match status" value="1"/>
</dbReference>
<dbReference type="PANTHER" id="PTHR11225">
    <property type="entry name" value="NUCLEAR PORE COMPLEX PROTEIN NUP93 NUCLEOPORIN NUP93 DEAD EYE PROTEIN"/>
    <property type="match status" value="1"/>
</dbReference>
<dbReference type="Pfam" id="PF04097">
    <property type="entry name" value="Nic96"/>
    <property type="match status" value="1"/>
</dbReference>
<gene>
    <name evidence="9" type="primary">Nup93-1</name>
    <name evidence="9" type="ORF">CG11092</name>
</gene>
<proteinExistence type="evidence at protein level"/>
<sequence>MDLMELLKQAQRLTNETNTDTEVPGVERTMSQVLQATKEFHSRVTQMGTNDLQAHILLGSKGVDLPKLTQKLESLSARQTFEPIDPVTETNVQAYLKNERENAILSVIDETNRSIFKSVERQKWRCIYSEWGEEKEALLNALVGPNQQDFPDVQFQIVPTAMADEPTPYSQLNGHEQMYAEQIAIHNQSIILGRRPNLLSTLAHVVQDSFNDESVAEMWNVLQFMTALPPVSSTIDPIKNRQTSPQFVEQARTYLERRYRTYMRKFIVANLAKARRGGIPSVYHMVRSYVGVTLQGQRALYGLHDVNNGQPLWPHVYYSLRSGDMDAAALYLKESGTCPDLLTLLTLRKNGDRDNLMVKLEGQLKLEYNSRLRACTDPYKKAVYVVLLACDPHFTHVELMRSIDDFLWMQLSILRRSDQSDSNTEQLTFSGLQSLILEKYGENYFNAREKAALYFQVLTLTGQFEAAIEFLARTEKNRTHAIHMAIALNEISMLGTPRSVEQSLLSSDPDDPKPMKRLNLVRLIVMYTKCFERTDTTQALHYYYLLRNFKSENGRGNVMLTCVCDLLVEKCDDEMLELIFGTEDKKNGLRYGGIYAEFQIHECDKYSLAEMVGDELSKRGDYELAIELYFIGGQLDKALRLVNSLLAQVVHQPTQNGSVRNRLGDIINRLDAALVVRKSDVEVQVVVTYTVLTKVMKFFDHYHEGALRSALEILTNNHLIPASSLEVDECVTNIKRMGPEVIKVLPDILLASMDIVYQEYVKLMDSNETASGFFDESKCVNKEPAVKHLRDRAKAFTNMAASVPYRMPSTTNQRLVQLEILMH</sequence>
<name>NU931_DROME</name>
<accession>Q9XZ06</accession>
<reference evidence="10" key="1">
    <citation type="journal article" date="2000" name="Science">
        <title>The genome sequence of Drosophila melanogaster.</title>
        <authorList>
            <person name="Adams M.D."/>
            <person name="Celniker S.E."/>
            <person name="Holt R.A."/>
            <person name="Evans C.A."/>
            <person name="Gocayne J.D."/>
            <person name="Amanatides P.G."/>
            <person name="Scherer S.E."/>
            <person name="Li P.W."/>
            <person name="Hoskins R.A."/>
            <person name="Galle R.F."/>
            <person name="George R.A."/>
            <person name="Lewis S.E."/>
            <person name="Richards S."/>
            <person name="Ashburner M."/>
            <person name="Henderson S.N."/>
            <person name="Sutton G.G."/>
            <person name="Wortman J.R."/>
            <person name="Yandell M.D."/>
            <person name="Zhang Q."/>
            <person name="Chen L.X."/>
            <person name="Brandon R.C."/>
            <person name="Rogers Y.-H.C."/>
            <person name="Blazej R.G."/>
            <person name="Champe M."/>
            <person name="Pfeiffer B.D."/>
            <person name="Wan K.H."/>
            <person name="Doyle C."/>
            <person name="Baxter E.G."/>
            <person name="Helt G."/>
            <person name="Nelson C.R."/>
            <person name="Miklos G.L.G."/>
            <person name="Abril J.F."/>
            <person name="Agbayani A."/>
            <person name="An H.-J."/>
            <person name="Andrews-Pfannkoch C."/>
            <person name="Baldwin D."/>
            <person name="Ballew R.M."/>
            <person name="Basu A."/>
            <person name="Baxendale J."/>
            <person name="Bayraktaroglu L."/>
            <person name="Beasley E.M."/>
            <person name="Beeson K.Y."/>
            <person name="Benos P.V."/>
            <person name="Berman B.P."/>
            <person name="Bhandari D."/>
            <person name="Bolshakov S."/>
            <person name="Borkova D."/>
            <person name="Botchan M.R."/>
            <person name="Bouck J."/>
            <person name="Brokstein P."/>
            <person name="Brottier P."/>
            <person name="Burtis K.C."/>
            <person name="Busam D.A."/>
            <person name="Butler H."/>
            <person name="Cadieu E."/>
            <person name="Center A."/>
            <person name="Chandra I."/>
            <person name="Cherry J.M."/>
            <person name="Cawley S."/>
            <person name="Dahlke C."/>
            <person name="Davenport L.B."/>
            <person name="Davies P."/>
            <person name="de Pablos B."/>
            <person name="Delcher A."/>
            <person name="Deng Z."/>
            <person name="Mays A.D."/>
            <person name="Dew I."/>
            <person name="Dietz S.M."/>
            <person name="Dodson K."/>
            <person name="Doup L.E."/>
            <person name="Downes M."/>
            <person name="Dugan-Rocha S."/>
            <person name="Dunkov B.C."/>
            <person name="Dunn P."/>
            <person name="Durbin K.J."/>
            <person name="Evangelista C.C."/>
            <person name="Ferraz C."/>
            <person name="Ferriera S."/>
            <person name="Fleischmann W."/>
            <person name="Fosler C."/>
            <person name="Gabrielian A.E."/>
            <person name="Garg N.S."/>
            <person name="Gelbart W.M."/>
            <person name="Glasser K."/>
            <person name="Glodek A."/>
            <person name="Gong F."/>
            <person name="Gorrell J.H."/>
            <person name="Gu Z."/>
            <person name="Guan P."/>
            <person name="Harris M."/>
            <person name="Harris N.L."/>
            <person name="Harvey D.A."/>
            <person name="Heiman T.J."/>
            <person name="Hernandez J.R."/>
            <person name="Houck J."/>
            <person name="Hostin D."/>
            <person name="Houston K.A."/>
            <person name="Howland T.J."/>
            <person name="Wei M.-H."/>
            <person name="Ibegwam C."/>
            <person name="Jalali M."/>
            <person name="Kalush F."/>
            <person name="Karpen G.H."/>
            <person name="Ke Z."/>
            <person name="Kennison J.A."/>
            <person name="Ketchum K.A."/>
            <person name="Kimmel B.E."/>
            <person name="Kodira C.D."/>
            <person name="Kraft C.L."/>
            <person name="Kravitz S."/>
            <person name="Kulp D."/>
            <person name="Lai Z."/>
            <person name="Lasko P."/>
            <person name="Lei Y."/>
            <person name="Levitsky A.A."/>
            <person name="Li J.H."/>
            <person name="Li Z."/>
            <person name="Liang Y."/>
            <person name="Lin X."/>
            <person name="Liu X."/>
            <person name="Mattei B."/>
            <person name="McIntosh T.C."/>
            <person name="McLeod M.P."/>
            <person name="McPherson D."/>
            <person name="Merkulov G."/>
            <person name="Milshina N.V."/>
            <person name="Mobarry C."/>
            <person name="Morris J."/>
            <person name="Moshrefi A."/>
            <person name="Mount S.M."/>
            <person name="Moy M."/>
            <person name="Murphy B."/>
            <person name="Murphy L."/>
            <person name="Muzny D.M."/>
            <person name="Nelson D.L."/>
            <person name="Nelson D.R."/>
            <person name="Nelson K.A."/>
            <person name="Nixon K."/>
            <person name="Nusskern D.R."/>
            <person name="Pacleb J.M."/>
            <person name="Palazzolo M."/>
            <person name="Pittman G.S."/>
            <person name="Pan S."/>
            <person name="Pollard J."/>
            <person name="Puri V."/>
            <person name="Reese M.G."/>
            <person name="Reinert K."/>
            <person name="Remington K."/>
            <person name="Saunders R.D.C."/>
            <person name="Scheeler F."/>
            <person name="Shen H."/>
            <person name="Shue B.C."/>
            <person name="Siden-Kiamos I."/>
            <person name="Simpson M."/>
            <person name="Skupski M.P."/>
            <person name="Smith T.J."/>
            <person name="Spier E."/>
            <person name="Spradling A.C."/>
            <person name="Stapleton M."/>
            <person name="Strong R."/>
            <person name="Sun E."/>
            <person name="Svirskas R."/>
            <person name="Tector C."/>
            <person name="Turner R."/>
            <person name="Venter E."/>
            <person name="Wang A.H."/>
            <person name="Wang X."/>
            <person name="Wang Z.-Y."/>
            <person name="Wassarman D.A."/>
            <person name="Weinstock G.M."/>
            <person name="Weissenbach J."/>
            <person name="Williams S.M."/>
            <person name="Woodage T."/>
            <person name="Worley K.C."/>
            <person name="Wu D."/>
            <person name="Yang S."/>
            <person name="Yao Q.A."/>
            <person name="Ye J."/>
            <person name="Yeh R.-F."/>
            <person name="Zaveri J.S."/>
            <person name="Zhan M."/>
            <person name="Zhang G."/>
            <person name="Zhao Q."/>
            <person name="Zheng L."/>
            <person name="Zheng X.H."/>
            <person name="Zhong F.N."/>
            <person name="Zhong W."/>
            <person name="Zhou X."/>
            <person name="Zhu S.C."/>
            <person name="Zhu X."/>
            <person name="Smith H.O."/>
            <person name="Gibbs R.A."/>
            <person name="Myers E.W."/>
            <person name="Rubin G.M."/>
            <person name="Venter J.C."/>
        </authorList>
    </citation>
    <scope>NUCLEOTIDE SEQUENCE [LARGE SCALE GENOMIC DNA]</scope>
    <source>
        <strain evidence="10">Berkeley</strain>
    </source>
</reference>
<reference evidence="10" key="2">
    <citation type="journal article" date="2002" name="Genome Biol.">
        <title>Annotation of the Drosophila melanogaster euchromatic genome: a systematic review.</title>
        <authorList>
            <person name="Misra S."/>
            <person name="Crosby M.A."/>
            <person name="Mungall C.J."/>
            <person name="Matthews B.B."/>
            <person name="Campbell K.S."/>
            <person name="Hradecky P."/>
            <person name="Huang Y."/>
            <person name="Kaminker J.S."/>
            <person name="Millburn G.H."/>
            <person name="Prochnik S.E."/>
            <person name="Smith C.D."/>
            <person name="Tupy J.L."/>
            <person name="Whitfield E.J."/>
            <person name="Bayraktaroglu L."/>
            <person name="Berman B.P."/>
            <person name="Bettencourt B.R."/>
            <person name="Celniker S.E."/>
            <person name="de Grey A.D.N.J."/>
            <person name="Drysdale R.A."/>
            <person name="Harris N.L."/>
            <person name="Richter J."/>
            <person name="Russo S."/>
            <person name="Schroeder A.J."/>
            <person name="Shu S.Q."/>
            <person name="Stapleton M."/>
            <person name="Yamada C."/>
            <person name="Ashburner M."/>
            <person name="Gelbart W.M."/>
            <person name="Rubin G.M."/>
            <person name="Lewis S.E."/>
        </authorList>
    </citation>
    <scope>GENOME REANNOTATION</scope>
    <source>
        <strain evidence="10">Berkeley</strain>
    </source>
</reference>
<reference evidence="8" key="3">
    <citation type="journal article" date="2000" name="Science">
        <title>A Drosophila complementary DNA resource.</title>
        <authorList>
            <person name="Rubin G.M."/>
            <person name="Hong L."/>
            <person name="Brokstein P."/>
            <person name="Evans-Holm M."/>
            <person name="Frise E."/>
            <person name="Stapleton M."/>
            <person name="Harvey D.A."/>
        </authorList>
    </citation>
    <scope>NUCLEOTIDE SEQUENCE [LARGE SCALE MRNA]</scope>
    <source>
        <strain evidence="8">Berkeley</strain>
        <tissue evidence="8">Embryo</tissue>
    </source>
</reference>
<reference evidence="7" key="4">
    <citation type="journal article" date="2010" name="Mol. Cell. Biol.">
        <title>Specific nucleoporin requirement for Smad nuclear translocation.</title>
        <authorList>
            <person name="Chen X."/>
            <person name="Xu L."/>
        </authorList>
    </citation>
    <scope>FUNCTION</scope>
    <scope>INTERACTION WITH MAD AND MSK</scope>
</reference>
<reference evidence="7" key="5">
    <citation type="journal article" date="2012" name="J. Cell Sci.">
        <title>The Nup155-mediated organisation of inner nuclear membrane proteins is independent of Nup155 anchoring to the metazoan nuclear pore complex.</title>
        <authorList>
            <person name="Busayavalasa K."/>
            <person name="Chen X."/>
            <person name="Farrants A.K."/>
            <person name="Wagner N."/>
            <person name="Sabri N."/>
        </authorList>
    </citation>
    <scope>FUNCTION</scope>
    <scope>INTERACTION WITH NUP154</scope>
</reference>
<reference evidence="7" key="6">
    <citation type="journal article" date="2015" name="Genes Dev.">
        <title>A negative loop within the nuclear pore complex controls global chromatin organization.</title>
        <authorList>
            <person name="Breuer M."/>
            <person name="Ohkura H."/>
        </authorList>
    </citation>
    <scope>FUNCTION</scope>
    <scope>DISRUPTION PHENOTYPE</scope>
</reference>
<reference key="7">
    <citation type="journal article" date="2019" name="Mol. Cell">
        <title>Core Components of the Nuclear Pore Bind Distinct States of Chromatin and Contribute to Polycomb Repression.</title>
        <authorList>
            <person name="Gozalo A."/>
            <person name="Duke A."/>
            <person name="Lan Y."/>
            <person name="Pascual-Garcia P."/>
            <person name="Talamas J.A."/>
            <person name="Nguyen S.C."/>
            <person name="Shah P.P."/>
            <person name="Jain R."/>
            <person name="Joyce E.F."/>
            <person name="Capelson M."/>
        </authorList>
    </citation>
    <scope>FUNCTION</scope>
    <scope>INTERACTION WITH PC AND E(Z)</scope>
    <scope>SUBCELLULAR LOCATION</scope>
    <scope>DISRUPTION PHENOTYPE</scope>
</reference>
<protein>
    <recommendedName>
        <fullName evidence="7">Nuclear pore complex protein Nup93-1</fullName>
    </recommendedName>
    <alternativeName>
        <fullName evidence="9">Nucleoporin 93kD-1</fullName>
    </alternativeName>
    <alternativeName>
        <fullName evidence="7">Nucleoporin Nup93-1</fullName>
    </alternativeName>
</protein>
<organism evidence="10">
    <name type="scientific">Drosophila melanogaster</name>
    <name type="common">Fruit fly</name>
    <dbReference type="NCBI Taxonomy" id="7227"/>
    <lineage>
        <taxon>Eukaryota</taxon>
        <taxon>Metazoa</taxon>
        <taxon>Ecdysozoa</taxon>
        <taxon>Arthropoda</taxon>
        <taxon>Hexapoda</taxon>
        <taxon>Insecta</taxon>
        <taxon>Pterygota</taxon>
        <taxon>Neoptera</taxon>
        <taxon>Endopterygota</taxon>
        <taxon>Diptera</taxon>
        <taxon>Brachycera</taxon>
        <taxon>Muscomorpha</taxon>
        <taxon>Ephydroidea</taxon>
        <taxon>Drosophilidae</taxon>
        <taxon>Drosophila</taxon>
        <taxon>Sophophora</taxon>
    </lineage>
</organism>